<gene>
    <name evidence="1" type="primary">dctA</name>
    <name type="ordered locus">BURPS1106A_0476</name>
</gene>
<comment type="function">
    <text evidence="1">Responsible for the transport of dicarboxylates such as succinate, fumarate, and malate from the periplasm across the membrane.</text>
</comment>
<comment type="subcellular location">
    <subcellularLocation>
        <location evidence="1">Cell inner membrane</location>
        <topology evidence="1">Multi-pass membrane protein</topology>
    </subcellularLocation>
</comment>
<comment type="similarity">
    <text evidence="1">Belongs to the dicarboxylate/amino acid:cation symporter (DAACS) (TC 2.A.23) family.</text>
</comment>
<protein>
    <recommendedName>
        <fullName evidence="1">C4-dicarboxylate transport protein</fullName>
    </recommendedName>
</protein>
<organism>
    <name type="scientific">Burkholderia pseudomallei (strain 1106a)</name>
    <dbReference type="NCBI Taxonomy" id="357348"/>
    <lineage>
        <taxon>Bacteria</taxon>
        <taxon>Pseudomonadati</taxon>
        <taxon>Pseudomonadota</taxon>
        <taxon>Betaproteobacteria</taxon>
        <taxon>Burkholderiales</taxon>
        <taxon>Burkholderiaceae</taxon>
        <taxon>Burkholderia</taxon>
        <taxon>pseudomallei group</taxon>
    </lineage>
</organism>
<reference key="1">
    <citation type="journal article" date="2010" name="Genome Biol. Evol.">
        <title>Continuing evolution of Burkholderia mallei through genome reduction and large-scale rearrangements.</title>
        <authorList>
            <person name="Losada L."/>
            <person name="Ronning C.M."/>
            <person name="DeShazer D."/>
            <person name="Woods D."/>
            <person name="Fedorova N."/>
            <person name="Kim H.S."/>
            <person name="Shabalina S.A."/>
            <person name="Pearson T.R."/>
            <person name="Brinkac L."/>
            <person name="Tan P."/>
            <person name="Nandi T."/>
            <person name="Crabtree J."/>
            <person name="Badger J."/>
            <person name="Beckstrom-Sternberg S."/>
            <person name="Saqib M."/>
            <person name="Schutzer S.E."/>
            <person name="Keim P."/>
            <person name="Nierman W.C."/>
        </authorList>
    </citation>
    <scope>NUCLEOTIDE SEQUENCE [LARGE SCALE GENOMIC DNA]</scope>
    <source>
        <strain>1106a</strain>
    </source>
</reference>
<accession>A3NQY8</accession>
<sequence>MKKPFYKVLYVQVIFAIVVGVILGHYYPSLAVDMKPLGDGFIKLIKMVIGPIIFCTVVTGIAGMQDMKKVGRVGGKALLYFEIVSTCALVLGLAATHILRPGVGFNIDPATLNGKEVASYAAKAHGQSSVDFLMHIIPNTMIDAFAQGEILQILLIALLFGSVLAHLGERGRVVTDFIDGITRVLFGIVHIVTKLAPIGAFGAMAFTIGKYGVGSLVPLLKLIGTFYLTSVVFVLVVLGAIARFTGFSIIRFVGYIKEELLIVLGTSSSEAALPQLMEKLEKAGCSRSVVGLVVPTGYSFNLDGTNIYMTMAVLFIAQATNIELTWMQQLTLLAVAMLTSKGASGVTGAGFITLAATLAVVPTIPLSGMVLILGIDRFMSECRALTNIVGNGVATVVVSAWEKELDRAKLRAALSGNGEAAAGEAARV</sequence>
<keyword id="KW-0997">Cell inner membrane</keyword>
<keyword id="KW-1003">Cell membrane</keyword>
<keyword id="KW-0472">Membrane</keyword>
<keyword id="KW-0769">Symport</keyword>
<keyword id="KW-0812">Transmembrane</keyword>
<keyword id="KW-1133">Transmembrane helix</keyword>
<keyword id="KW-0813">Transport</keyword>
<feature type="chain" id="PRO_1000067438" description="C4-dicarboxylate transport protein">
    <location>
        <begin position="1"/>
        <end position="428"/>
    </location>
</feature>
<feature type="transmembrane region" description="Helical" evidence="1">
    <location>
        <begin position="8"/>
        <end position="28"/>
    </location>
</feature>
<feature type="transmembrane region" description="Helical" evidence="1">
    <location>
        <begin position="44"/>
        <end position="64"/>
    </location>
</feature>
<feature type="transmembrane region" description="Helical" evidence="1">
    <location>
        <begin position="78"/>
        <end position="98"/>
    </location>
</feature>
<feature type="transmembrane region" description="Helical" evidence="1">
    <location>
        <begin position="148"/>
        <end position="168"/>
    </location>
</feature>
<feature type="transmembrane region" description="Helical" evidence="1">
    <location>
        <begin position="184"/>
        <end position="204"/>
    </location>
</feature>
<feature type="transmembrane region" description="Helical" evidence="1">
    <location>
        <begin position="222"/>
        <end position="242"/>
    </location>
</feature>
<feature type="transmembrane region" description="Helical" evidence="1">
    <location>
        <begin position="307"/>
        <end position="327"/>
    </location>
</feature>
<feature type="transmembrane region" description="Helical" evidence="1">
    <location>
        <begin position="355"/>
        <end position="375"/>
    </location>
</feature>
<evidence type="ECO:0000255" key="1">
    <source>
        <dbReference type="HAMAP-Rule" id="MF_01300"/>
    </source>
</evidence>
<proteinExistence type="inferred from homology"/>
<dbReference type="EMBL" id="CP000572">
    <property type="protein sequence ID" value="ABN90178.1"/>
    <property type="molecule type" value="Genomic_DNA"/>
</dbReference>
<dbReference type="RefSeq" id="WP_004526010.1">
    <property type="nucleotide sequence ID" value="NC_009076.1"/>
</dbReference>
<dbReference type="SMR" id="A3NQY8"/>
<dbReference type="KEGG" id="bpl:BURPS1106A_0476"/>
<dbReference type="HOGENOM" id="CLU_019375_7_0_4"/>
<dbReference type="Proteomes" id="UP000006738">
    <property type="component" value="Chromosome I"/>
</dbReference>
<dbReference type="GO" id="GO:0005886">
    <property type="term" value="C:plasma membrane"/>
    <property type="evidence" value="ECO:0007669"/>
    <property type="project" value="UniProtKB-SubCell"/>
</dbReference>
<dbReference type="GO" id="GO:0015138">
    <property type="term" value="F:fumarate transmembrane transporter activity"/>
    <property type="evidence" value="ECO:0007669"/>
    <property type="project" value="TreeGrafter"/>
</dbReference>
<dbReference type="GO" id="GO:0015366">
    <property type="term" value="F:malate:proton symporter activity"/>
    <property type="evidence" value="ECO:0007669"/>
    <property type="project" value="TreeGrafter"/>
</dbReference>
<dbReference type="GO" id="GO:0015141">
    <property type="term" value="F:succinate transmembrane transporter activity"/>
    <property type="evidence" value="ECO:0007669"/>
    <property type="project" value="TreeGrafter"/>
</dbReference>
<dbReference type="GO" id="GO:0070778">
    <property type="term" value="P:L-aspartate transmembrane transport"/>
    <property type="evidence" value="ECO:0007669"/>
    <property type="project" value="TreeGrafter"/>
</dbReference>
<dbReference type="FunFam" id="1.10.3860.10:FF:000001">
    <property type="entry name" value="C4-dicarboxylate transport protein"/>
    <property type="match status" value="1"/>
</dbReference>
<dbReference type="Gene3D" id="1.10.3860.10">
    <property type="entry name" value="Sodium:dicarboxylate symporter"/>
    <property type="match status" value="1"/>
</dbReference>
<dbReference type="HAMAP" id="MF_01300">
    <property type="entry name" value="C4_dicarb_transport"/>
    <property type="match status" value="1"/>
</dbReference>
<dbReference type="InterPro" id="IPR023954">
    <property type="entry name" value="C4_dicarb_transport"/>
</dbReference>
<dbReference type="InterPro" id="IPR001991">
    <property type="entry name" value="Na-dicarboxylate_symporter"/>
</dbReference>
<dbReference type="InterPro" id="IPR018107">
    <property type="entry name" value="Na-dicarboxylate_symporter_CS"/>
</dbReference>
<dbReference type="InterPro" id="IPR036458">
    <property type="entry name" value="Na:dicarbo_symporter_sf"/>
</dbReference>
<dbReference type="NCBIfam" id="NF002461">
    <property type="entry name" value="PRK01663.1"/>
    <property type="match status" value="1"/>
</dbReference>
<dbReference type="NCBIfam" id="NF009587">
    <property type="entry name" value="PRK13027.1"/>
    <property type="match status" value="1"/>
</dbReference>
<dbReference type="PANTHER" id="PTHR42865:SF1">
    <property type="entry name" value="AEROBIC C4-DICARBOXYLATE TRANSPORT PROTEIN"/>
    <property type="match status" value="1"/>
</dbReference>
<dbReference type="PANTHER" id="PTHR42865">
    <property type="entry name" value="PROTON/GLUTAMATE-ASPARTATE SYMPORTER"/>
    <property type="match status" value="1"/>
</dbReference>
<dbReference type="Pfam" id="PF00375">
    <property type="entry name" value="SDF"/>
    <property type="match status" value="1"/>
</dbReference>
<dbReference type="PRINTS" id="PR00173">
    <property type="entry name" value="EDTRNSPORT"/>
</dbReference>
<dbReference type="SUPFAM" id="SSF118215">
    <property type="entry name" value="Proton glutamate symport protein"/>
    <property type="match status" value="1"/>
</dbReference>
<dbReference type="PROSITE" id="PS00713">
    <property type="entry name" value="NA_DICARBOXYL_SYMP_1"/>
    <property type="match status" value="1"/>
</dbReference>
<dbReference type="PROSITE" id="PS00714">
    <property type="entry name" value="NA_DICARBOXYL_SYMP_2"/>
    <property type="match status" value="1"/>
</dbReference>
<name>DCTA_BURP0</name>